<keyword id="KW-0028">Amino-acid biosynthesis</keyword>
<keyword id="KW-0055">Arginine biosynthesis</keyword>
<keyword id="KW-0067">ATP-binding</keyword>
<keyword id="KW-0963">Cytoplasm</keyword>
<keyword id="KW-0418">Kinase</keyword>
<keyword id="KW-0547">Nucleotide-binding</keyword>
<keyword id="KW-0808">Transferase</keyword>
<gene>
    <name evidence="1" type="primary">argB</name>
    <name type="ordered locus">ASA_0579</name>
</gene>
<organism>
    <name type="scientific">Aeromonas salmonicida (strain A449)</name>
    <dbReference type="NCBI Taxonomy" id="382245"/>
    <lineage>
        <taxon>Bacteria</taxon>
        <taxon>Pseudomonadati</taxon>
        <taxon>Pseudomonadota</taxon>
        <taxon>Gammaproteobacteria</taxon>
        <taxon>Aeromonadales</taxon>
        <taxon>Aeromonadaceae</taxon>
        <taxon>Aeromonas</taxon>
    </lineage>
</organism>
<comment type="function">
    <text evidence="1">Catalyzes the ATP-dependent phosphorylation of N-acetyl-L-glutamate.</text>
</comment>
<comment type="catalytic activity">
    <reaction evidence="1">
        <text>N-acetyl-L-glutamate + ATP = N-acetyl-L-glutamyl 5-phosphate + ADP</text>
        <dbReference type="Rhea" id="RHEA:14629"/>
        <dbReference type="ChEBI" id="CHEBI:30616"/>
        <dbReference type="ChEBI" id="CHEBI:44337"/>
        <dbReference type="ChEBI" id="CHEBI:57936"/>
        <dbReference type="ChEBI" id="CHEBI:456216"/>
        <dbReference type="EC" id="2.7.2.8"/>
    </reaction>
</comment>
<comment type="pathway">
    <text evidence="1">Amino-acid biosynthesis; L-arginine biosynthesis; N(2)-acetyl-L-ornithine from L-glutamate: step 2/4.</text>
</comment>
<comment type="subcellular location">
    <subcellularLocation>
        <location evidence="1">Cytoplasm</location>
    </subcellularLocation>
</comment>
<comment type="similarity">
    <text evidence="1">Belongs to the acetylglutamate kinase family. ArgB subfamily.</text>
</comment>
<accession>A4SIM3</accession>
<reference key="1">
    <citation type="journal article" date="2008" name="BMC Genomics">
        <title>The genome of Aeromonas salmonicida subsp. salmonicida A449: insights into the evolution of a fish pathogen.</title>
        <authorList>
            <person name="Reith M.E."/>
            <person name="Singh R.K."/>
            <person name="Curtis B."/>
            <person name="Boyd J.M."/>
            <person name="Bouevitch A."/>
            <person name="Kimball J."/>
            <person name="Munholland J."/>
            <person name="Murphy C."/>
            <person name="Sarty D."/>
            <person name="Williams J."/>
            <person name="Nash J.H."/>
            <person name="Johnson S.C."/>
            <person name="Brown L.L."/>
        </authorList>
    </citation>
    <scope>NUCLEOTIDE SEQUENCE [LARGE SCALE GENOMIC DNA]</scope>
    <source>
        <strain>A449</strain>
    </source>
</reference>
<protein>
    <recommendedName>
        <fullName evidence="1">Acetylglutamate kinase</fullName>
        <ecNumber evidence="1">2.7.2.8</ecNumber>
    </recommendedName>
    <alternativeName>
        <fullName evidence="1">N-acetyl-L-glutamate 5-phosphotransferase</fullName>
    </alternativeName>
    <alternativeName>
        <fullName evidence="1">NAG kinase</fullName>
        <shortName evidence="1">NAGK</shortName>
    </alternativeName>
</protein>
<sequence length="259" mass="26412">MDKQTLVIKLGGALIENDEALTALFGTLKTFLDEQHRPLVLVHGGGCLVDDLLKGLGLSSTKKNGLRVTPFEQIPFIAGALAGTANKQMMAKAIATGIPAVGLCLADGGLCQVTQLDPDLGAVGDCQPGNPALVTGILAQGFLPVVSSIGITADGQLMNVNADQAATAIAEALGADLVMLSDVSGILDGKGKLVPQLNKATALDLMEKGVISDGMAVKVKAALHAAETLGKPVCVASWRYPDQLLKLLAGGAVGTQVTL</sequence>
<dbReference type="EC" id="2.7.2.8" evidence="1"/>
<dbReference type="EMBL" id="CP000644">
    <property type="protein sequence ID" value="ABO88745.1"/>
    <property type="molecule type" value="Genomic_DNA"/>
</dbReference>
<dbReference type="RefSeq" id="WP_005313765.1">
    <property type="nucleotide sequence ID" value="NC_009348.1"/>
</dbReference>
<dbReference type="SMR" id="A4SIM3"/>
<dbReference type="STRING" id="29491.GCA_000820065_01920"/>
<dbReference type="KEGG" id="asa:ASA_0579"/>
<dbReference type="eggNOG" id="COG0548">
    <property type="taxonomic scope" value="Bacteria"/>
</dbReference>
<dbReference type="HOGENOM" id="CLU_053680_1_1_6"/>
<dbReference type="UniPathway" id="UPA00068">
    <property type="reaction ID" value="UER00107"/>
</dbReference>
<dbReference type="Proteomes" id="UP000000225">
    <property type="component" value="Chromosome"/>
</dbReference>
<dbReference type="GO" id="GO:0005737">
    <property type="term" value="C:cytoplasm"/>
    <property type="evidence" value="ECO:0007669"/>
    <property type="project" value="UniProtKB-SubCell"/>
</dbReference>
<dbReference type="GO" id="GO:0003991">
    <property type="term" value="F:acetylglutamate kinase activity"/>
    <property type="evidence" value="ECO:0007669"/>
    <property type="project" value="UniProtKB-UniRule"/>
</dbReference>
<dbReference type="GO" id="GO:0005524">
    <property type="term" value="F:ATP binding"/>
    <property type="evidence" value="ECO:0007669"/>
    <property type="project" value="UniProtKB-UniRule"/>
</dbReference>
<dbReference type="GO" id="GO:0042450">
    <property type="term" value="P:arginine biosynthetic process via ornithine"/>
    <property type="evidence" value="ECO:0007669"/>
    <property type="project" value="UniProtKB-UniRule"/>
</dbReference>
<dbReference type="GO" id="GO:0006526">
    <property type="term" value="P:L-arginine biosynthetic process"/>
    <property type="evidence" value="ECO:0007669"/>
    <property type="project" value="UniProtKB-UniPathway"/>
</dbReference>
<dbReference type="Gene3D" id="3.40.1160.10">
    <property type="entry name" value="Acetylglutamate kinase-like"/>
    <property type="match status" value="1"/>
</dbReference>
<dbReference type="HAMAP" id="MF_00082">
    <property type="entry name" value="ArgB"/>
    <property type="match status" value="1"/>
</dbReference>
<dbReference type="InterPro" id="IPR036393">
    <property type="entry name" value="AceGlu_kinase-like_sf"/>
</dbReference>
<dbReference type="InterPro" id="IPR004662">
    <property type="entry name" value="AcgluKinase_fam"/>
</dbReference>
<dbReference type="InterPro" id="IPR037528">
    <property type="entry name" value="ArgB"/>
</dbReference>
<dbReference type="InterPro" id="IPR001048">
    <property type="entry name" value="Asp/Glu/Uridylate_kinase"/>
</dbReference>
<dbReference type="NCBIfam" id="TIGR00761">
    <property type="entry name" value="argB"/>
    <property type="match status" value="1"/>
</dbReference>
<dbReference type="PANTHER" id="PTHR23342">
    <property type="entry name" value="N-ACETYLGLUTAMATE SYNTHASE"/>
    <property type="match status" value="1"/>
</dbReference>
<dbReference type="PANTHER" id="PTHR23342:SF0">
    <property type="entry name" value="N-ACETYLGLUTAMATE SYNTHASE, MITOCHONDRIAL"/>
    <property type="match status" value="1"/>
</dbReference>
<dbReference type="Pfam" id="PF00696">
    <property type="entry name" value="AA_kinase"/>
    <property type="match status" value="1"/>
</dbReference>
<dbReference type="PIRSF" id="PIRSF000728">
    <property type="entry name" value="NAGK"/>
    <property type="match status" value="1"/>
</dbReference>
<dbReference type="SUPFAM" id="SSF53633">
    <property type="entry name" value="Carbamate kinase-like"/>
    <property type="match status" value="1"/>
</dbReference>
<evidence type="ECO:0000255" key="1">
    <source>
        <dbReference type="HAMAP-Rule" id="MF_00082"/>
    </source>
</evidence>
<name>ARGB_AERS4</name>
<proteinExistence type="inferred from homology"/>
<feature type="chain" id="PRO_1000010481" description="Acetylglutamate kinase">
    <location>
        <begin position="1"/>
        <end position="259"/>
    </location>
</feature>
<feature type="binding site" evidence="1">
    <location>
        <begin position="45"/>
        <end position="46"/>
    </location>
    <ligand>
        <name>substrate</name>
    </ligand>
</feature>
<feature type="binding site" evidence="1">
    <location>
        <position position="67"/>
    </location>
    <ligand>
        <name>substrate</name>
    </ligand>
</feature>
<feature type="binding site" evidence="1">
    <location>
        <position position="159"/>
    </location>
    <ligand>
        <name>substrate</name>
    </ligand>
</feature>
<feature type="site" description="Transition state stabilizer" evidence="1">
    <location>
        <position position="9"/>
    </location>
</feature>
<feature type="site" description="Transition state stabilizer" evidence="1">
    <location>
        <position position="218"/>
    </location>
</feature>